<proteinExistence type="inferred from homology"/>
<comment type="catalytic activity">
    <reaction evidence="2">
        <text>glucuronate acceptor + UDP-alpha-D-glucuronate = acceptor beta-D-glucuronoside + UDP + H(+)</text>
        <dbReference type="Rhea" id="RHEA:21032"/>
        <dbReference type="ChEBI" id="CHEBI:15378"/>
        <dbReference type="ChEBI" id="CHEBI:58052"/>
        <dbReference type="ChEBI" id="CHEBI:58223"/>
        <dbReference type="ChEBI" id="CHEBI:132367"/>
        <dbReference type="ChEBI" id="CHEBI:132368"/>
        <dbReference type="EC" id="2.4.1.17"/>
    </reaction>
</comment>
<comment type="subcellular location">
    <subcellularLocation>
        <location evidence="3">Membrane</location>
        <topology evidence="3">Single-pass membrane protein</topology>
    </subcellularLocation>
</comment>
<comment type="similarity">
    <text evidence="3">Belongs to the UDP-glycosyltransferase family.</text>
</comment>
<feature type="signal peptide" evidence="3">
    <location>
        <begin position="1"/>
        <end position="21"/>
    </location>
</feature>
<feature type="chain" id="PRO_0000396642" description="Putative UDP-glucuronosyltransferase ugt-47" evidence="3">
    <location>
        <begin position="22"/>
        <end position="536"/>
    </location>
</feature>
<feature type="transmembrane region" description="Helical" evidence="3">
    <location>
        <begin position="497"/>
        <end position="517"/>
    </location>
</feature>
<feature type="glycosylation site" description="N-linked (GlcNAc...) asparagine" evidence="1">
    <location>
        <position position="52"/>
    </location>
</feature>
<feature type="glycosylation site" description="N-linked (GlcNAc...) asparagine" evidence="3">
    <location>
        <position position="308"/>
    </location>
</feature>
<protein>
    <recommendedName>
        <fullName>Putative UDP-glucuronosyltransferase ugt-47</fullName>
        <shortName>UDPGT 47</shortName>
        <ecNumber>2.4.1.17</ecNumber>
    </recommendedName>
</protein>
<keyword id="KW-0325">Glycoprotein</keyword>
<keyword id="KW-0328">Glycosyltransferase</keyword>
<keyword id="KW-0472">Membrane</keyword>
<keyword id="KW-1185">Reference proteome</keyword>
<keyword id="KW-0732">Signal</keyword>
<keyword id="KW-0808">Transferase</keyword>
<keyword id="KW-0812">Transmembrane</keyword>
<keyword id="KW-1133">Transmembrane helix</keyword>
<organism>
    <name type="scientific">Caenorhabditis briggsae</name>
    <dbReference type="NCBI Taxonomy" id="6238"/>
    <lineage>
        <taxon>Eukaryota</taxon>
        <taxon>Metazoa</taxon>
        <taxon>Ecdysozoa</taxon>
        <taxon>Nematoda</taxon>
        <taxon>Chromadorea</taxon>
        <taxon>Rhabditida</taxon>
        <taxon>Rhabditina</taxon>
        <taxon>Rhabditomorpha</taxon>
        <taxon>Rhabditoidea</taxon>
        <taxon>Rhabditidae</taxon>
        <taxon>Peloderinae</taxon>
        <taxon>Caenorhabditis</taxon>
    </lineage>
</organism>
<gene>
    <name type="primary">ugt-47</name>
    <name type="ORF">CBG24767</name>
</gene>
<sequence length="536" mass="60621">MMLQTSTILQLLLFLVGSVSAYNILVFSPATSKSHLISNGRIADELARAGHNVTLLEIDFLGIVDTTKSAKLVKKTIVRTPKGMQGFRNVLQGFSEIVMEDPGLWGLVEGNIMYQNAYNALCEEFLEMDDIFQELKAQNFDGFFAEQLNICGFGYAKALGIERRFLISSCPYFSHVYDYTSHPAPYASVPFVADMSPEPTYFERAQNLLNGFTCNMLFRYMHTRLSFIFRNKFGQDFPSVPEIVRNADIIFLATDEIIDFSAPTLPNLVNIGGLGVDDDTTEMEPVFEAEMKKGEKGVILFSLGTIANTSTIDKKVMESFLGIVKKFPDYHFLIRADKYDKNTKERAKGISNVFVSDWLPQPAILHHPRLRTFITHAGYNGLVEAARAGVPLITIPFMFDQNLNSRAIEKKGWGIRSDKKKLLNDPDSFEADLKEMLTNPSYTKNAHRIRDLIKSKPLGARDRFIKTTEWVIQNGGVRELLTEGRDLSIISSYNLDIIVPVLFVLLYCLIIPFFKLIGGFYYYSCFGHIESKHKLD</sequence>
<accession>A8WLF6</accession>
<evidence type="ECO:0000250" key="1">
    <source>
        <dbReference type="UniProtKB" id="Q21706"/>
    </source>
</evidence>
<evidence type="ECO:0000250" key="2">
    <source>
        <dbReference type="UniProtKB" id="Q9BY64"/>
    </source>
</evidence>
<evidence type="ECO:0000255" key="3"/>
<reference key="1">
    <citation type="journal article" date="2003" name="PLoS Biol.">
        <title>The genome sequence of Caenorhabditis briggsae: a platform for comparative genomics.</title>
        <authorList>
            <person name="Stein L.D."/>
            <person name="Bao Z."/>
            <person name="Blasiar D."/>
            <person name="Blumenthal T."/>
            <person name="Brent M.R."/>
            <person name="Chen N."/>
            <person name="Chinwalla A."/>
            <person name="Clarke L."/>
            <person name="Clee C."/>
            <person name="Coghlan A."/>
            <person name="Coulson A."/>
            <person name="D'Eustachio P."/>
            <person name="Fitch D.H.A."/>
            <person name="Fulton L.A."/>
            <person name="Fulton R.E."/>
            <person name="Griffiths-Jones S."/>
            <person name="Harris T.W."/>
            <person name="Hillier L.W."/>
            <person name="Kamath R."/>
            <person name="Kuwabara P.E."/>
            <person name="Mardis E.R."/>
            <person name="Marra M.A."/>
            <person name="Miner T.L."/>
            <person name="Minx P."/>
            <person name="Mullikin J.C."/>
            <person name="Plumb R.W."/>
            <person name="Rogers J."/>
            <person name="Schein J.E."/>
            <person name="Sohrmann M."/>
            <person name="Spieth J."/>
            <person name="Stajich J.E."/>
            <person name="Wei C."/>
            <person name="Willey D."/>
            <person name="Wilson R.K."/>
            <person name="Durbin R.M."/>
            <person name="Waterston R.H."/>
        </authorList>
    </citation>
    <scope>NUCLEOTIDE SEQUENCE [LARGE SCALE GENOMIC DNA]</scope>
    <source>
        <strain>AF16</strain>
    </source>
</reference>
<name>UGT47_CAEBR</name>
<dbReference type="EC" id="2.4.1.17"/>
<dbReference type="EMBL" id="HE601485">
    <property type="protein sequence ID" value="CAP21301.3"/>
    <property type="molecule type" value="Genomic_DNA"/>
</dbReference>
<dbReference type="SMR" id="A8WLF6"/>
<dbReference type="FunCoup" id="A8WLF6">
    <property type="interactions" value="3"/>
</dbReference>
<dbReference type="STRING" id="6238.A8WLF6"/>
<dbReference type="GlyCosmos" id="A8WLF6">
    <property type="glycosylation" value="2 sites, No reported glycans"/>
</dbReference>
<dbReference type="WormBase" id="CBG24767">
    <property type="protein sequence ID" value="CBP24717"/>
    <property type="gene ID" value="WBGene00042804"/>
    <property type="gene designation" value="Cbr-ugt-47"/>
</dbReference>
<dbReference type="eggNOG" id="KOG1192">
    <property type="taxonomic scope" value="Eukaryota"/>
</dbReference>
<dbReference type="HOGENOM" id="CLU_012949_1_3_1"/>
<dbReference type="InParanoid" id="A8WLF6"/>
<dbReference type="OMA" id="NICGFGY"/>
<dbReference type="Proteomes" id="UP000008549">
    <property type="component" value="Unassembled WGS sequence"/>
</dbReference>
<dbReference type="GO" id="GO:0016020">
    <property type="term" value="C:membrane"/>
    <property type="evidence" value="ECO:0007669"/>
    <property type="project" value="UniProtKB-SubCell"/>
</dbReference>
<dbReference type="GO" id="GO:0015020">
    <property type="term" value="F:glucuronosyltransferase activity"/>
    <property type="evidence" value="ECO:0007669"/>
    <property type="project" value="UniProtKB-EC"/>
</dbReference>
<dbReference type="GO" id="GO:0008194">
    <property type="term" value="F:UDP-glycosyltransferase activity"/>
    <property type="evidence" value="ECO:0000318"/>
    <property type="project" value="GO_Central"/>
</dbReference>
<dbReference type="CDD" id="cd03784">
    <property type="entry name" value="GT1_Gtf-like"/>
    <property type="match status" value="1"/>
</dbReference>
<dbReference type="FunFam" id="3.40.50.2000:FF:000021">
    <property type="entry name" value="UDP-glucuronosyltransferase"/>
    <property type="match status" value="1"/>
</dbReference>
<dbReference type="Gene3D" id="3.40.50.2000">
    <property type="entry name" value="Glycogen Phosphorylase B"/>
    <property type="match status" value="1"/>
</dbReference>
<dbReference type="InterPro" id="IPR050271">
    <property type="entry name" value="UDP-glycosyltransferase"/>
</dbReference>
<dbReference type="InterPro" id="IPR002213">
    <property type="entry name" value="UDP_glucos_trans"/>
</dbReference>
<dbReference type="PANTHER" id="PTHR48043">
    <property type="entry name" value="EG:EG0003.4 PROTEIN-RELATED"/>
    <property type="match status" value="1"/>
</dbReference>
<dbReference type="PANTHER" id="PTHR48043:SF13">
    <property type="entry name" value="UDP-GLUCURONOSYLTRANSFERASE UGT-47-RELATED"/>
    <property type="match status" value="1"/>
</dbReference>
<dbReference type="Pfam" id="PF00201">
    <property type="entry name" value="UDPGT"/>
    <property type="match status" value="1"/>
</dbReference>
<dbReference type="SUPFAM" id="SSF53756">
    <property type="entry name" value="UDP-Glycosyltransferase/glycogen phosphorylase"/>
    <property type="match status" value="1"/>
</dbReference>